<proteinExistence type="inferred from homology"/>
<sequence length="356" mass="38750">MSKLKDNPDNSLNDRLNREKAIELARVQIEKDFGKGSLIKMGESPVGKGIESISSGSILLDEAIGVGGYPRGRIIEIFGPESSGKTTLTLQAIAEVQKNGGIAAFIDAEHALDPAYAKALGVNIDELWISQPDTGEQALEIAEYLIRSGGVDLIVVDSVAALTPQAEIDGEMGDSQIGLQARLMSKALRKITGILSKSNTCIMFINQLRMKIGVMFGNPETTTGGNALKFYSSLRLEVRKIDQVTGSSADDIVGNKIRIKVVKNKVAPPFRKVELVIYFGKGISREASILDASVKYNLIQKTGSWYSMGDDKLGQGREHAVSYLVKEKEVTDELESKLRKIIFEDPNQDFLEVGTT</sequence>
<accession>Q8VS69</accession>
<dbReference type="EMBL" id="AF395125">
    <property type="protein sequence ID" value="AAL57321.1"/>
    <property type="molecule type" value="Genomic_DNA"/>
</dbReference>
<dbReference type="RefSeq" id="WP_012421910.1">
    <property type="nucleotide sequence ID" value="NZ_CP161006.1"/>
</dbReference>
<dbReference type="SMR" id="Q8VS69"/>
<dbReference type="STRING" id="140.A0V01_03675"/>
<dbReference type="eggNOG" id="COG0468">
    <property type="taxonomic scope" value="Bacteria"/>
</dbReference>
<dbReference type="OMA" id="DSKMGLH"/>
<dbReference type="OrthoDB" id="9776733at2"/>
<dbReference type="GO" id="GO:0005829">
    <property type="term" value="C:cytosol"/>
    <property type="evidence" value="ECO:0007669"/>
    <property type="project" value="TreeGrafter"/>
</dbReference>
<dbReference type="GO" id="GO:0005524">
    <property type="term" value="F:ATP binding"/>
    <property type="evidence" value="ECO:0007669"/>
    <property type="project" value="UniProtKB-UniRule"/>
</dbReference>
<dbReference type="GO" id="GO:0016887">
    <property type="term" value="F:ATP hydrolysis activity"/>
    <property type="evidence" value="ECO:0007669"/>
    <property type="project" value="InterPro"/>
</dbReference>
<dbReference type="GO" id="GO:0140664">
    <property type="term" value="F:ATP-dependent DNA damage sensor activity"/>
    <property type="evidence" value="ECO:0007669"/>
    <property type="project" value="InterPro"/>
</dbReference>
<dbReference type="GO" id="GO:0003684">
    <property type="term" value="F:damaged DNA binding"/>
    <property type="evidence" value="ECO:0007669"/>
    <property type="project" value="UniProtKB-UniRule"/>
</dbReference>
<dbReference type="GO" id="GO:0003697">
    <property type="term" value="F:single-stranded DNA binding"/>
    <property type="evidence" value="ECO:0007669"/>
    <property type="project" value="UniProtKB-UniRule"/>
</dbReference>
<dbReference type="GO" id="GO:0006310">
    <property type="term" value="P:DNA recombination"/>
    <property type="evidence" value="ECO:0007669"/>
    <property type="project" value="UniProtKB-UniRule"/>
</dbReference>
<dbReference type="GO" id="GO:0006281">
    <property type="term" value="P:DNA repair"/>
    <property type="evidence" value="ECO:0007669"/>
    <property type="project" value="UniProtKB-UniRule"/>
</dbReference>
<dbReference type="GO" id="GO:0009432">
    <property type="term" value="P:SOS response"/>
    <property type="evidence" value="ECO:0007669"/>
    <property type="project" value="UniProtKB-UniRule"/>
</dbReference>
<dbReference type="CDD" id="cd00983">
    <property type="entry name" value="RecA"/>
    <property type="match status" value="1"/>
</dbReference>
<dbReference type="FunFam" id="3.40.50.300:FF:000087">
    <property type="entry name" value="Recombinase RecA"/>
    <property type="match status" value="1"/>
</dbReference>
<dbReference type="Gene3D" id="3.40.50.300">
    <property type="entry name" value="P-loop containing nucleotide triphosphate hydrolases"/>
    <property type="match status" value="1"/>
</dbReference>
<dbReference type="HAMAP" id="MF_00268">
    <property type="entry name" value="RecA"/>
    <property type="match status" value="1"/>
</dbReference>
<dbReference type="InterPro" id="IPR003593">
    <property type="entry name" value="AAA+_ATPase"/>
</dbReference>
<dbReference type="InterPro" id="IPR013765">
    <property type="entry name" value="DNA_recomb/repair_RecA"/>
</dbReference>
<dbReference type="InterPro" id="IPR020584">
    <property type="entry name" value="DNA_recomb/repair_RecA_CS"/>
</dbReference>
<dbReference type="InterPro" id="IPR027417">
    <property type="entry name" value="P-loop_NTPase"/>
</dbReference>
<dbReference type="InterPro" id="IPR049261">
    <property type="entry name" value="RecA-like_C"/>
</dbReference>
<dbReference type="InterPro" id="IPR049428">
    <property type="entry name" value="RecA-like_N"/>
</dbReference>
<dbReference type="InterPro" id="IPR020588">
    <property type="entry name" value="RecA_ATP-bd"/>
</dbReference>
<dbReference type="InterPro" id="IPR023400">
    <property type="entry name" value="RecA_C_sf"/>
</dbReference>
<dbReference type="InterPro" id="IPR020587">
    <property type="entry name" value="RecA_monomer-monomer_interface"/>
</dbReference>
<dbReference type="NCBIfam" id="TIGR02012">
    <property type="entry name" value="tigrfam_recA"/>
    <property type="match status" value="1"/>
</dbReference>
<dbReference type="PANTHER" id="PTHR45900:SF1">
    <property type="entry name" value="MITOCHONDRIAL DNA REPAIR PROTEIN RECA HOMOLOG-RELATED"/>
    <property type="match status" value="1"/>
</dbReference>
<dbReference type="PANTHER" id="PTHR45900">
    <property type="entry name" value="RECA"/>
    <property type="match status" value="1"/>
</dbReference>
<dbReference type="Pfam" id="PF00154">
    <property type="entry name" value="RecA"/>
    <property type="match status" value="1"/>
</dbReference>
<dbReference type="Pfam" id="PF21096">
    <property type="entry name" value="RecA_C"/>
    <property type="match status" value="1"/>
</dbReference>
<dbReference type="PRINTS" id="PR00142">
    <property type="entry name" value="RECA"/>
</dbReference>
<dbReference type="SMART" id="SM00382">
    <property type="entry name" value="AAA"/>
    <property type="match status" value="1"/>
</dbReference>
<dbReference type="SUPFAM" id="SSF52540">
    <property type="entry name" value="P-loop containing nucleoside triphosphate hydrolases"/>
    <property type="match status" value="1"/>
</dbReference>
<dbReference type="SUPFAM" id="SSF54752">
    <property type="entry name" value="RecA protein, C-terminal domain"/>
    <property type="match status" value="1"/>
</dbReference>
<dbReference type="PROSITE" id="PS00321">
    <property type="entry name" value="RECA_1"/>
    <property type="match status" value="1"/>
</dbReference>
<dbReference type="PROSITE" id="PS50162">
    <property type="entry name" value="RECA_2"/>
    <property type="match status" value="1"/>
</dbReference>
<dbReference type="PROSITE" id="PS50163">
    <property type="entry name" value="RECA_3"/>
    <property type="match status" value="1"/>
</dbReference>
<name>RECA_BORHE</name>
<organism>
    <name type="scientific">Borrelia hermsii</name>
    <dbReference type="NCBI Taxonomy" id="140"/>
    <lineage>
        <taxon>Bacteria</taxon>
        <taxon>Pseudomonadati</taxon>
        <taxon>Spirochaetota</taxon>
        <taxon>Spirochaetia</taxon>
        <taxon>Spirochaetales</taxon>
        <taxon>Borreliaceae</taxon>
        <taxon>Borrelia</taxon>
    </lineage>
</organism>
<evidence type="ECO:0000255" key="1">
    <source>
        <dbReference type="HAMAP-Rule" id="MF_00268"/>
    </source>
</evidence>
<keyword id="KW-0067">ATP-binding</keyword>
<keyword id="KW-0963">Cytoplasm</keyword>
<keyword id="KW-0227">DNA damage</keyword>
<keyword id="KW-0233">DNA recombination</keyword>
<keyword id="KW-0234">DNA repair</keyword>
<keyword id="KW-0238">DNA-binding</keyword>
<keyword id="KW-0547">Nucleotide-binding</keyword>
<keyword id="KW-0742">SOS response</keyword>
<protein>
    <recommendedName>
        <fullName evidence="1">Protein RecA</fullName>
    </recommendedName>
    <alternativeName>
        <fullName evidence="1">Recombinase A</fullName>
    </alternativeName>
</protein>
<feature type="chain" id="PRO_0000122666" description="Protein RecA">
    <location>
        <begin position="1"/>
        <end position="356"/>
    </location>
</feature>
<feature type="binding site" evidence="1">
    <location>
        <begin position="79"/>
        <end position="86"/>
    </location>
    <ligand>
        <name>ATP</name>
        <dbReference type="ChEBI" id="CHEBI:30616"/>
    </ligand>
</feature>
<comment type="function">
    <text evidence="1">Can catalyze the hydrolysis of ATP in the presence of single-stranded DNA, the ATP-dependent uptake of single-stranded DNA by duplex DNA, and the ATP-dependent hybridization of homologous single-stranded DNAs. It interacts with LexA causing its activation and leading to its autocatalytic cleavage.</text>
</comment>
<comment type="subcellular location">
    <subcellularLocation>
        <location evidence="1">Cytoplasm</location>
    </subcellularLocation>
</comment>
<comment type="similarity">
    <text evidence="1">Belongs to the RecA family.</text>
</comment>
<reference key="1">
    <citation type="journal article" date="2004" name="J. Bacteriol.">
        <title>Transgenic expression of RecA of the spirochetes Borrelia burgdorferi and Borrelia hermsii in Escherichia coli revealed differences in DNA repair and recombination phenotypes.</title>
        <authorList>
            <person name="Putteet-Driver A.D."/>
            <person name="Zhong J."/>
            <person name="Barbour A.G."/>
        </authorList>
    </citation>
    <scope>NUCLEOTIDE SEQUENCE [GENOMIC DNA]</scope>
</reference>
<gene>
    <name evidence="1" type="primary">recA</name>
</gene>